<accession>Q54CY9</accession>
<keyword id="KW-0067">ATP-binding</keyword>
<keyword id="KW-0418">Kinase</keyword>
<keyword id="KW-0547">Nucleotide-binding</keyword>
<keyword id="KW-0597">Phosphoprotein</keyword>
<keyword id="KW-1185">Reference proteome</keyword>
<keyword id="KW-0723">Serine/threonine-protein kinase</keyword>
<keyword id="KW-0808">Transferase</keyword>
<reference key="1">
    <citation type="journal article" date="2005" name="Nature">
        <title>The genome of the social amoeba Dictyostelium discoideum.</title>
        <authorList>
            <person name="Eichinger L."/>
            <person name="Pachebat J.A."/>
            <person name="Gloeckner G."/>
            <person name="Rajandream M.A."/>
            <person name="Sucgang R."/>
            <person name="Berriman M."/>
            <person name="Song J."/>
            <person name="Olsen R."/>
            <person name="Szafranski K."/>
            <person name="Xu Q."/>
            <person name="Tunggal B."/>
            <person name="Kummerfeld S."/>
            <person name="Madera M."/>
            <person name="Konfortov B.A."/>
            <person name="Rivero F."/>
            <person name="Bankier A.T."/>
            <person name="Lehmann R."/>
            <person name="Hamlin N."/>
            <person name="Davies R."/>
            <person name="Gaudet P."/>
            <person name="Fey P."/>
            <person name="Pilcher K."/>
            <person name="Chen G."/>
            <person name="Saunders D."/>
            <person name="Sodergren E.J."/>
            <person name="Davis P."/>
            <person name="Kerhornou A."/>
            <person name="Nie X."/>
            <person name="Hall N."/>
            <person name="Anjard C."/>
            <person name="Hemphill L."/>
            <person name="Bason N."/>
            <person name="Farbrother P."/>
            <person name="Desany B."/>
            <person name="Just E."/>
            <person name="Morio T."/>
            <person name="Rost R."/>
            <person name="Churcher C.M."/>
            <person name="Cooper J."/>
            <person name="Haydock S."/>
            <person name="van Driessche N."/>
            <person name="Cronin A."/>
            <person name="Goodhead I."/>
            <person name="Muzny D.M."/>
            <person name="Mourier T."/>
            <person name="Pain A."/>
            <person name="Lu M."/>
            <person name="Harper D."/>
            <person name="Lindsay R."/>
            <person name="Hauser H."/>
            <person name="James K.D."/>
            <person name="Quiles M."/>
            <person name="Madan Babu M."/>
            <person name="Saito T."/>
            <person name="Buchrieser C."/>
            <person name="Wardroper A."/>
            <person name="Felder M."/>
            <person name="Thangavelu M."/>
            <person name="Johnson D."/>
            <person name="Knights A."/>
            <person name="Loulseged H."/>
            <person name="Mungall K.L."/>
            <person name="Oliver K."/>
            <person name="Price C."/>
            <person name="Quail M.A."/>
            <person name="Urushihara H."/>
            <person name="Hernandez J."/>
            <person name="Rabbinowitsch E."/>
            <person name="Steffen D."/>
            <person name="Sanders M."/>
            <person name="Ma J."/>
            <person name="Kohara Y."/>
            <person name="Sharp S."/>
            <person name="Simmonds M.N."/>
            <person name="Spiegler S."/>
            <person name="Tivey A."/>
            <person name="Sugano S."/>
            <person name="White B."/>
            <person name="Walker D."/>
            <person name="Woodward J.R."/>
            <person name="Winckler T."/>
            <person name="Tanaka Y."/>
            <person name="Shaulsky G."/>
            <person name="Schleicher M."/>
            <person name="Weinstock G.M."/>
            <person name="Rosenthal A."/>
            <person name="Cox E.C."/>
            <person name="Chisholm R.L."/>
            <person name="Gibbs R.A."/>
            <person name="Loomis W.F."/>
            <person name="Platzer M."/>
            <person name="Kay R.R."/>
            <person name="Williams J.G."/>
            <person name="Dear P.H."/>
            <person name="Noegel A.A."/>
            <person name="Barrell B.G."/>
            <person name="Kuspa A."/>
        </authorList>
    </citation>
    <scope>NUCLEOTIDE SEQUENCE [LARGE SCALE GENOMIC DNA]</scope>
    <source>
        <strain>AX4</strain>
    </source>
</reference>
<reference key="2">
    <citation type="journal article" date="2008" name="BMC Genomics">
        <title>Genome-wide transcriptional changes induced by phagocytosis or growth on bacteria in Dictyostelium.</title>
        <authorList>
            <person name="Sillo A."/>
            <person name="Bloomfield G."/>
            <person name="Balest A."/>
            <person name="Balbo A."/>
            <person name="Pergolizzi B."/>
            <person name="Peracino B."/>
            <person name="Skelton J."/>
            <person name="Ivens A."/>
            <person name="Bozzaro S."/>
        </authorList>
    </citation>
    <scope>IDENTIFICATION</scope>
</reference>
<dbReference type="EC" id="2.7.11.18"/>
<dbReference type="EMBL" id="AAFI02000194">
    <property type="protein sequence ID" value="EAL61115.1"/>
    <property type="molecule type" value="Genomic_DNA"/>
</dbReference>
<dbReference type="RefSeq" id="XP_629531.1">
    <property type="nucleotide sequence ID" value="XM_629529.1"/>
</dbReference>
<dbReference type="SMR" id="Q54CY9"/>
<dbReference type="FunCoup" id="Q54CY9">
    <property type="interactions" value="9"/>
</dbReference>
<dbReference type="STRING" id="44689.Q54CY9"/>
<dbReference type="PaxDb" id="44689-DDB0216312"/>
<dbReference type="EnsemblProtists" id="EAL61115">
    <property type="protein sequence ID" value="EAL61115"/>
    <property type="gene ID" value="DDB_G0292624"/>
</dbReference>
<dbReference type="GeneID" id="8628787"/>
<dbReference type="KEGG" id="ddi:DDB_G0292624"/>
<dbReference type="dictyBase" id="DDB_G0292624"/>
<dbReference type="VEuPathDB" id="AmoebaDB:DDB_G0292624"/>
<dbReference type="eggNOG" id="KOG0032">
    <property type="taxonomic scope" value="Eukaryota"/>
</dbReference>
<dbReference type="HOGENOM" id="CLU_000288_63_0_1"/>
<dbReference type="InParanoid" id="Q54CY9"/>
<dbReference type="OMA" id="RPKVQPC"/>
<dbReference type="PhylomeDB" id="Q54CY9"/>
<dbReference type="Reactome" id="R-DDI-9619229">
    <property type="pathway name" value="Activation of RAC1 downstream of NMDARs"/>
</dbReference>
<dbReference type="PRO" id="PR:Q54CY9"/>
<dbReference type="Proteomes" id="UP000002195">
    <property type="component" value="Chromosome 6"/>
</dbReference>
<dbReference type="GO" id="GO:0005737">
    <property type="term" value="C:cytoplasm"/>
    <property type="evidence" value="ECO:0000318"/>
    <property type="project" value="GO_Central"/>
</dbReference>
<dbReference type="GO" id="GO:0005524">
    <property type="term" value="F:ATP binding"/>
    <property type="evidence" value="ECO:0007669"/>
    <property type="project" value="UniProtKB-KW"/>
</dbReference>
<dbReference type="GO" id="GO:0004687">
    <property type="term" value="F:myosin light chain kinase activity"/>
    <property type="evidence" value="ECO:0007669"/>
    <property type="project" value="UniProtKB-EC"/>
</dbReference>
<dbReference type="GO" id="GO:0004674">
    <property type="term" value="F:protein serine/threonine kinase activity"/>
    <property type="evidence" value="ECO:0000250"/>
    <property type="project" value="dictyBase"/>
</dbReference>
<dbReference type="GO" id="GO:0007165">
    <property type="term" value="P:signal transduction"/>
    <property type="evidence" value="ECO:0000318"/>
    <property type="project" value="GO_Central"/>
</dbReference>
<dbReference type="CDD" id="cd05117">
    <property type="entry name" value="STKc_CAMK"/>
    <property type="match status" value="1"/>
</dbReference>
<dbReference type="FunFam" id="3.30.200.20:FF:000315">
    <property type="entry name" value="Calcium-dependent protein kinase 3"/>
    <property type="match status" value="1"/>
</dbReference>
<dbReference type="FunFam" id="1.10.510.10:FF:001779">
    <property type="entry name" value="Probable myosin light chain kinase DDB_G0292624"/>
    <property type="match status" value="1"/>
</dbReference>
<dbReference type="Gene3D" id="1.10.510.10">
    <property type="entry name" value="Transferase(Phosphotransferase) domain 1"/>
    <property type="match status" value="1"/>
</dbReference>
<dbReference type="InterPro" id="IPR011009">
    <property type="entry name" value="Kinase-like_dom_sf"/>
</dbReference>
<dbReference type="InterPro" id="IPR000719">
    <property type="entry name" value="Prot_kinase_dom"/>
</dbReference>
<dbReference type="InterPro" id="IPR017441">
    <property type="entry name" value="Protein_kinase_ATP_BS"/>
</dbReference>
<dbReference type="InterPro" id="IPR008271">
    <property type="entry name" value="Ser/Thr_kinase_AS"/>
</dbReference>
<dbReference type="PANTHER" id="PTHR24347">
    <property type="entry name" value="SERINE/THREONINE-PROTEIN KINASE"/>
    <property type="match status" value="1"/>
</dbReference>
<dbReference type="Pfam" id="PF00069">
    <property type="entry name" value="Pkinase"/>
    <property type="match status" value="1"/>
</dbReference>
<dbReference type="SMART" id="SM00220">
    <property type="entry name" value="S_TKc"/>
    <property type="match status" value="1"/>
</dbReference>
<dbReference type="SUPFAM" id="SSF56112">
    <property type="entry name" value="Protein kinase-like (PK-like)"/>
    <property type="match status" value="1"/>
</dbReference>
<dbReference type="PROSITE" id="PS00107">
    <property type="entry name" value="PROTEIN_KINASE_ATP"/>
    <property type="match status" value="1"/>
</dbReference>
<dbReference type="PROSITE" id="PS50011">
    <property type="entry name" value="PROTEIN_KINASE_DOM"/>
    <property type="match status" value="1"/>
</dbReference>
<dbReference type="PROSITE" id="PS00108">
    <property type="entry name" value="PROTEIN_KINASE_ST"/>
    <property type="match status" value="1"/>
</dbReference>
<evidence type="ECO:0000250" key="1"/>
<evidence type="ECO:0000255" key="2">
    <source>
        <dbReference type="PROSITE-ProRule" id="PRU00159"/>
    </source>
</evidence>
<evidence type="ECO:0000255" key="3">
    <source>
        <dbReference type="PROSITE-ProRule" id="PRU10027"/>
    </source>
</evidence>
<evidence type="ECO:0000305" key="4"/>
<gene>
    <name type="ORF">DDB_G0292624</name>
</gene>
<name>MYLKD_DICDI</name>
<organism>
    <name type="scientific">Dictyostelium discoideum</name>
    <name type="common">Social amoeba</name>
    <dbReference type="NCBI Taxonomy" id="44689"/>
    <lineage>
        <taxon>Eukaryota</taxon>
        <taxon>Amoebozoa</taxon>
        <taxon>Evosea</taxon>
        <taxon>Eumycetozoa</taxon>
        <taxon>Dictyostelia</taxon>
        <taxon>Dictyosteliales</taxon>
        <taxon>Dictyosteliaceae</taxon>
        <taxon>Dictyostelium</taxon>
    </lineage>
</organism>
<sequence length="313" mass="35691">MPIGDYELHKEIGKGAFSVVFLVTEKKTKKQWAMKIIDKKSSSKAALETEIEIMKKVDHPNIVKMHEYFESTDKIYLVVELVTGGPLFDRIVDKKSFTEKEAKLITQQLLQSLVYLHSIGIVHRDLKPENLLLKTPTDLTVALSDFGLSKIVGDDVFMKTTCGTPSYVAPEVLNNISNSPTAYSDAVDMWGVGVITYILLCGFPPFYSEDIRKLFESILSASYDFPNDYWGNVSKEAKHFINCLLTVEPTKRYSAKQALEHPWIIENNQTQPLPHWNDQIKKYMVIRRKESQKFGAELVWKPQAQTTNVKPTK</sequence>
<protein>
    <recommendedName>
        <fullName>Probable myosin light chain kinase DDB_G0292624</fullName>
        <ecNumber>2.7.11.18</ecNumber>
    </recommendedName>
</protein>
<feature type="chain" id="PRO_0000367463" description="Probable myosin light chain kinase DDB_G0292624">
    <location>
        <begin position="1"/>
        <end position="313"/>
    </location>
</feature>
<feature type="domain" description="Protein kinase" evidence="2">
    <location>
        <begin position="6"/>
        <end position="264"/>
    </location>
</feature>
<feature type="active site" description="Proton acceptor" evidence="2 3">
    <location>
        <position position="125"/>
    </location>
</feature>
<feature type="binding site" evidence="2">
    <location>
        <begin position="12"/>
        <end position="20"/>
    </location>
    <ligand>
        <name>ATP</name>
        <dbReference type="ChEBI" id="CHEBI:30616"/>
    </ligand>
</feature>
<feature type="binding site" evidence="2">
    <location>
        <position position="35"/>
    </location>
    <ligand>
        <name>ATP</name>
        <dbReference type="ChEBI" id="CHEBI:30616"/>
    </ligand>
</feature>
<proteinExistence type="inferred from homology"/>
<comment type="function">
    <text evidence="1">May phosphorylate a specific serine in the N-terminus of a myosin light chain.</text>
</comment>
<comment type="catalytic activity">
    <reaction>
        <text>L-seryl-[myosin light chain] + ATP = O-phospho-L-seryl-[myosin light chain] + ADP + H(+)</text>
        <dbReference type="Rhea" id="RHEA:22004"/>
        <dbReference type="Rhea" id="RHEA-COMP:13684"/>
        <dbReference type="Rhea" id="RHEA-COMP:13685"/>
        <dbReference type="ChEBI" id="CHEBI:15378"/>
        <dbReference type="ChEBI" id="CHEBI:29999"/>
        <dbReference type="ChEBI" id="CHEBI:30616"/>
        <dbReference type="ChEBI" id="CHEBI:83421"/>
        <dbReference type="ChEBI" id="CHEBI:456216"/>
        <dbReference type="EC" id="2.7.11.18"/>
    </reaction>
</comment>
<comment type="catalytic activity">
    <reaction>
        <text>L-threonyl-[myosin light chain] + ATP = O-phospho-L-threonyl-[myosin light chain] + ADP + H(+)</text>
        <dbReference type="Rhea" id="RHEA:53900"/>
        <dbReference type="Rhea" id="RHEA-COMP:13686"/>
        <dbReference type="Rhea" id="RHEA-COMP:13687"/>
        <dbReference type="ChEBI" id="CHEBI:15378"/>
        <dbReference type="ChEBI" id="CHEBI:30013"/>
        <dbReference type="ChEBI" id="CHEBI:30616"/>
        <dbReference type="ChEBI" id="CHEBI:61977"/>
        <dbReference type="ChEBI" id="CHEBI:456216"/>
        <dbReference type="EC" id="2.7.11.18"/>
    </reaction>
</comment>
<comment type="activity regulation">
    <text>Does not have a calmodulin-binding domain.</text>
</comment>
<comment type="similarity">
    <text evidence="4">Belongs to the protein kinase superfamily. CAMK Ser/Thr protein kinase family. CaMK subfamily.</text>
</comment>